<comment type="function">
    <text evidence="2">Catalyzes the hydrolysis of N(4)-acetylcytidine (ac4C).</text>
</comment>
<comment type="catalytic activity">
    <reaction evidence="2">
        <text>N(4)-acetylcytidine + H2O = cytidine + acetate + H(+)</text>
        <dbReference type="Rhea" id="RHEA:62932"/>
        <dbReference type="ChEBI" id="CHEBI:15377"/>
        <dbReference type="ChEBI" id="CHEBI:15378"/>
        <dbReference type="ChEBI" id="CHEBI:17562"/>
        <dbReference type="ChEBI" id="CHEBI:30089"/>
        <dbReference type="ChEBI" id="CHEBI:70989"/>
        <dbReference type="EC" id="3.5.1.135"/>
    </reaction>
</comment>
<comment type="catalytic activity">
    <reaction evidence="2">
        <text>N(4)-acetyl-2'-deoxycytidine + H2O = 2'-deoxycytidine + acetate + H(+)</text>
        <dbReference type="Rhea" id="RHEA:62936"/>
        <dbReference type="ChEBI" id="CHEBI:15377"/>
        <dbReference type="ChEBI" id="CHEBI:15378"/>
        <dbReference type="ChEBI" id="CHEBI:15698"/>
        <dbReference type="ChEBI" id="CHEBI:30089"/>
        <dbReference type="ChEBI" id="CHEBI:146133"/>
        <dbReference type="EC" id="3.5.1.135"/>
    </reaction>
</comment>
<comment type="catalytic activity">
    <reaction evidence="2">
        <text>N(4)-acetylcytosine + H2O = cytosine + acetate + H(+)</text>
        <dbReference type="Rhea" id="RHEA:62940"/>
        <dbReference type="ChEBI" id="CHEBI:15377"/>
        <dbReference type="ChEBI" id="CHEBI:15378"/>
        <dbReference type="ChEBI" id="CHEBI:16040"/>
        <dbReference type="ChEBI" id="CHEBI:30089"/>
        <dbReference type="ChEBI" id="CHEBI:146134"/>
        <dbReference type="EC" id="3.5.1.135"/>
    </reaction>
</comment>
<comment type="similarity">
    <text evidence="2">Belongs to the N(4)-acetylcytidine amidohydrolase family.</text>
</comment>
<accession>Q1CH57</accession>
<accession>C4GUP8</accession>
<sequence length="102" mass="11852">MNREITFFGRFEADILADRKTITIRDSSESDFRSGEVLRVCRNEDGVFFCHIKVKSVTPVTLDGLSERHAEQENMSLDELKKVIKAIYPGLDRFYVIEFTRC</sequence>
<feature type="chain" id="PRO_1000044966" description="N(4)-acetylcytidine amidohydrolase">
    <location>
        <begin position="1"/>
        <end position="102"/>
    </location>
</feature>
<feature type="domain" description="ASCH" evidence="1">
    <location>
        <begin position="6"/>
        <end position="92"/>
    </location>
</feature>
<feature type="active site" description="Proton acceptor" evidence="2">
    <location>
        <position position="20"/>
    </location>
</feature>
<feature type="active site" description="Nucleophile" evidence="2">
    <location>
        <position position="23"/>
    </location>
</feature>
<feature type="active site" description="Proton donor" evidence="2">
    <location>
        <position position="73"/>
    </location>
</feature>
<dbReference type="EC" id="3.5.1.135" evidence="2"/>
<dbReference type="EMBL" id="CP000305">
    <property type="protein sequence ID" value="ABG18673.1"/>
    <property type="molecule type" value="Genomic_DNA"/>
</dbReference>
<dbReference type="EMBL" id="ACNQ01000013">
    <property type="protein sequence ID" value="EEO76435.1"/>
    <property type="molecule type" value="Genomic_DNA"/>
</dbReference>
<dbReference type="SMR" id="Q1CH57"/>
<dbReference type="KEGG" id="ypn:YPN_2345"/>
<dbReference type="HOGENOM" id="CLU_152586_0_0_6"/>
<dbReference type="Proteomes" id="UP000008936">
    <property type="component" value="Chromosome"/>
</dbReference>
<dbReference type="GO" id="GO:0005829">
    <property type="term" value="C:cytosol"/>
    <property type="evidence" value="ECO:0007669"/>
    <property type="project" value="TreeGrafter"/>
</dbReference>
<dbReference type="GO" id="GO:0016813">
    <property type="term" value="F:hydrolase activity, acting on carbon-nitrogen (but not peptide) bonds, in linear amidines"/>
    <property type="evidence" value="ECO:0007669"/>
    <property type="project" value="UniProtKB-UniRule"/>
</dbReference>
<dbReference type="GO" id="GO:0106251">
    <property type="term" value="F:N4-acetylcytidine amidohydrolase activity"/>
    <property type="evidence" value="ECO:0007669"/>
    <property type="project" value="RHEA"/>
</dbReference>
<dbReference type="CDD" id="cd06552">
    <property type="entry name" value="ASCH_yqfb_like"/>
    <property type="match status" value="1"/>
</dbReference>
<dbReference type="FunFam" id="2.30.130.30:FF:000001">
    <property type="entry name" value="UPF0267 protein YqfB"/>
    <property type="match status" value="1"/>
</dbReference>
<dbReference type="Gene3D" id="2.30.130.30">
    <property type="entry name" value="Hypothetical protein"/>
    <property type="match status" value="1"/>
</dbReference>
<dbReference type="HAMAP" id="MF_00684">
    <property type="entry name" value="ac4C_amidohydr"/>
    <property type="match status" value="1"/>
</dbReference>
<dbReference type="InterPro" id="IPR008314">
    <property type="entry name" value="AC4CH"/>
</dbReference>
<dbReference type="InterPro" id="IPR007374">
    <property type="entry name" value="ASCH_domain"/>
</dbReference>
<dbReference type="InterPro" id="IPR015947">
    <property type="entry name" value="PUA-like_sf"/>
</dbReference>
<dbReference type="NCBIfam" id="NF003443">
    <property type="entry name" value="PRK04980.1"/>
    <property type="match status" value="1"/>
</dbReference>
<dbReference type="PANTHER" id="PTHR38088">
    <property type="entry name" value="UCP029143 FAMILY PROTEIN"/>
    <property type="match status" value="1"/>
</dbReference>
<dbReference type="PANTHER" id="PTHR38088:SF2">
    <property type="entry name" value="UCP029143 FAMILY PROTEIN"/>
    <property type="match status" value="1"/>
</dbReference>
<dbReference type="Pfam" id="PF04266">
    <property type="entry name" value="ASCH"/>
    <property type="match status" value="1"/>
</dbReference>
<dbReference type="PIRSF" id="PIRSF029143">
    <property type="entry name" value="UCP029143"/>
    <property type="match status" value="1"/>
</dbReference>
<dbReference type="SMART" id="SM01022">
    <property type="entry name" value="ASCH"/>
    <property type="match status" value="1"/>
</dbReference>
<dbReference type="SUPFAM" id="SSF88697">
    <property type="entry name" value="PUA domain-like"/>
    <property type="match status" value="1"/>
</dbReference>
<gene>
    <name type="ordered locus">YPN_2345</name>
    <name type="ORF">YP516_2643</name>
</gene>
<name>AC4CH_YERPN</name>
<organism>
    <name type="scientific">Yersinia pestis bv. Antiqua (strain Nepal516)</name>
    <dbReference type="NCBI Taxonomy" id="377628"/>
    <lineage>
        <taxon>Bacteria</taxon>
        <taxon>Pseudomonadati</taxon>
        <taxon>Pseudomonadota</taxon>
        <taxon>Gammaproteobacteria</taxon>
        <taxon>Enterobacterales</taxon>
        <taxon>Yersiniaceae</taxon>
        <taxon>Yersinia</taxon>
    </lineage>
</organism>
<keyword id="KW-0378">Hydrolase</keyword>
<proteinExistence type="inferred from homology"/>
<protein>
    <recommendedName>
        <fullName evidence="2">N(4)-acetylcytidine amidohydrolase</fullName>
        <shortName evidence="2">ac4C amidohydrolase</shortName>
        <ecNumber evidence="2">3.5.1.135</ecNumber>
    </recommendedName>
</protein>
<reference key="1">
    <citation type="journal article" date="2006" name="J. Bacteriol.">
        <title>Complete genome sequence of Yersinia pestis strains Antiqua and Nepal516: evidence of gene reduction in an emerging pathogen.</title>
        <authorList>
            <person name="Chain P.S.G."/>
            <person name="Hu P."/>
            <person name="Malfatti S.A."/>
            <person name="Radnedge L."/>
            <person name="Larimer F."/>
            <person name="Vergez L.M."/>
            <person name="Worsham P."/>
            <person name="Chu M.C."/>
            <person name="Andersen G.L."/>
        </authorList>
    </citation>
    <scope>NUCLEOTIDE SEQUENCE [LARGE SCALE GENOMIC DNA]</scope>
    <source>
        <strain>Nepal516</strain>
    </source>
</reference>
<reference key="2">
    <citation type="submission" date="2009-04" db="EMBL/GenBank/DDBJ databases">
        <title>Yersinia pestis Nepal516A whole genome shotgun sequencing project.</title>
        <authorList>
            <person name="Plunkett G. III"/>
            <person name="Anderson B.D."/>
            <person name="Baumler D.J."/>
            <person name="Burland V."/>
            <person name="Cabot E.L."/>
            <person name="Glasner J.D."/>
            <person name="Mau B."/>
            <person name="Neeno-Eckwall E."/>
            <person name="Perna N.T."/>
            <person name="Munk A.C."/>
            <person name="Tapia R."/>
            <person name="Green L.D."/>
            <person name="Rogers Y.C."/>
            <person name="Detter J.C."/>
            <person name="Bruce D.C."/>
            <person name="Brettin T.S."/>
        </authorList>
    </citation>
    <scope>NUCLEOTIDE SEQUENCE [LARGE SCALE GENOMIC DNA]</scope>
    <source>
        <strain>Nepal516</strain>
    </source>
</reference>
<evidence type="ECO:0000255" key="1"/>
<evidence type="ECO:0000255" key="2">
    <source>
        <dbReference type="HAMAP-Rule" id="MF_00684"/>
    </source>
</evidence>